<sequence length="238" mass="26532">MAGHSKWANTKHRKERADHKKGKIFSRTIKELISAVKMGGPDPKSNARLRMIIQKAKDQNIPNENIERNLKKASSADQKNYEEVTYELYGFGGVGIIVEAMTDNKNRTASDMRVAVNKRGGALVEPGSVLYNFSRKGACYVPKHSIDEASLLTHVIDCGGEDLDSDDEEFFLVLCEPTDLASVKEALLAKGVTCSEERLIYVPLRLVDCDEETGKSNLALIEWLENIDDVDDVYHNMA</sequence>
<proteinExistence type="inferred from homology"/>
<protein>
    <recommendedName>
        <fullName evidence="1">Probable transcriptional regulatory protein CTA_0499</fullName>
    </recommendedName>
</protein>
<comment type="subcellular location">
    <subcellularLocation>
        <location evidence="1">Cytoplasm</location>
    </subcellularLocation>
</comment>
<comment type="similarity">
    <text evidence="1">Belongs to the TACO1 family.</text>
</comment>
<organism>
    <name type="scientific">Chlamydia trachomatis serovar A (strain ATCC VR-571B / DSM 19440 / HAR-13)</name>
    <dbReference type="NCBI Taxonomy" id="315277"/>
    <lineage>
        <taxon>Bacteria</taxon>
        <taxon>Pseudomonadati</taxon>
        <taxon>Chlamydiota</taxon>
        <taxon>Chlamydiia</taxon>
        <taxon>Chlamydiales</taxon>
        <taxon>Chlamydiaceae</taxon>
        <taxon>Chlamydia/Chlamydophila group</taxon>
        <taxon>Chlamydia</taxon>
    </lineage>
</organism>
<accession>Q3KLP1</accession>
<reference key="1">
    <citation type="journal article" date="2005" name="Infect. Immun.">
        <title>Comparative genomic analysis of Chlamydia trachomatis oculotropic and genitotropic strains.</title>
        <authorList>
            <person name="Carlson J.H."/>
            <person name="Porcella S.F."/>
            <person name="McClarty G."/>
            <person name="Caldwell H.D."/>
        </authorList>
    </citation>
    <scope>NUCLEOTIDE SEQUENCE [LARGE SCALE GENOMIC DNA]</scope>
    <source>
        <strain>ATCC VR-571B / DSM 19440 / HAR-13</strain>
    </source>
</reference>
<feature type="chain" id="PRO_0000257042" description="Probable transcriptional regulatory protein CTA_0499">
    <location>
        <begin position="1"/>
        <end position="238"/>
    </location>
</feature>
<feature type="region of interest" description="Disordered" evidence="2">
    <location>
        <begin position="1"/>
        <end position="21"/>
    </location>
</feature>
<feature type="compositionally biased region" description="Basic residues" evidence="2">
    <location>
        <begin position="9"/>
        <end position="21"/>
    </location>
</feature>
<keyword id="KW-0963">Cytoplasm</keyword>
<keyword id="KW-0238">DNA-binding</keyword>
<keyword id="KW-0804">Transcription</keyword>
<keyword id="KW-0805">Transcription regulation</keyword>
<evidence type="ECO:0000255" key="1">
    <source>
        <dbReference type="HAMAP-Rule" id="MF_00693"/>
    </source>
</evidence>
<evidence type="ECO:0000256" key="2">
    <source>
        <dbReference type="SAM" id="MobiDB-lite"/>
    </source>
</evidence>
<name>Y499_CHLTA</name>
<dbReference type="EMBL" id="CP000051">
    <property type="protein sequence ID" value="AAX50731.1"/>
    <property type="molecule type" value="Genomic_DNA"/>
</dbReference>
<dbReference type="RefSeq" id="WP_009873826.1">
    <property type="nucleotide sequence ID" value="NC_007429.1"/>
</dbReference>
<dbReference type="SMR" id="Q3KLP1"/>
<dbReference type="KEGG" id="cta:CTA_0499"/>
<dbReference type="HOGENOM" id="CLU_062974_3_0_0"/>
<dbReference type="Proteomes" id="UP000002532">
    <property type="component" value="Chromosome"/>
</dbReference>
<dbReference type="GO" id="GO:0005829">
    <property type="term" value="C:cytosol"/>
    <property type="evidence" value="ECO:0007669"/>
    <property type="project" value="TreeGrafter"/>
</dbReference>
<dbReference type="GO" id="GO:0003677">
    <property type="term" value="F:DNA binding"/>
    <property type="evidence" value="ECO:0007669"/>
    <property type="project" value="UniProtKB-UniRule"/>
</dbReference>
<dbReference type="GO" id="GO:0006355">
    <property type="term" value="P:regulation of DNA-templated transcription"/>
    <property type="evidence" value="ECO:0007669"/>
    <property type="project" value="UniProtKB-UniRule"/>
</dbReference>
<dbReference type="FunFam" id="1.10.10.200:FF:000002">
    <property type="entry name" value="Probable transcriptional regulatory protein CLM62_37755"/>
    <property type="match status" value="1"/>
</dbReference>
<dbReference type="Gene3D" id="1.10.10.200">
    <property type="match status" value="1"/>
</dbReference>
<dbReference type="Gene3D" id="3.30.70.980">
    <property type="match status" value="2"/>
</dbReference>
<dbReference type="HAMAP" id="MF_00693">
    <property type="entry name" value="Transcrip_reg_TACO1"/>
    <property type="match status" value="1"/>
</dbReference>
<dbReference type="InterPro" id="IPR017856">
    <property type="entry name" value="Integrase-like_N"/>
</dbReference>
<dbReference type="InterPro" id="IPR048300">
    <property type="entry name" value="TACO1_YebC-like_2nd/3rd_dom"/>
</dbReference>
<dbReference type="InterPro" id="IPR049083">
    <property type="entry name" value="TACO1_YebC_N"/>
</dbReference>
<dbReference type="InterPro" id="IPR002876">
    <property type="entry name" value="Transcrip_reg_TACO1-like"/>
</dbReference>
<dbReference type="InterPro" id="IPR026564">
    <property type="entry name" value="Transcrip_reg_TACO1-like_dom3"/>
</dbReference>
<dbReference type="InterPro" id="IPR029072">
    <property type="entry name" value="YebC-like"/>
</dbReference>
<dbReference type="NCBIfam" id="NF001030">
    <property type="entry name" value="PRK00110.1"/>
    <property type="match status" value="1"/>
</dbReference>
<dbReference type="NCBIfam" id="NF009044">
    <property type="entry name" value="PRK12378.1"/>
    <property type="match status" value="1"/>
</dbReference>
<dbReference type="NCBIfam" id="TIGR01033">
    <property type="entry name" value="YebC/PmpR family DNA-binding transcriptional regulator"/>
    <property type="match status" value="1"/>
</dbReference>
<dbReference type="PANTHER" id="PTHR12532:SF6">
    <property type="entry name" value="TRANSCRIPTIONAL REGULATORY PROTEIN YEBC-RELATED"/>
    <property type="match status" value="1"/>
</dbReference>
<dbReference type="PANTHER" id="PTHR12532">
    <property type="entry name" value="TRANSLATIONAL ACTIVATOR OF CYTOCHROME C OXIDASE 1"/>
    <property type="match status" value="1"/>
</dbReference>
<dbReference type="Pfam" id="PF20772">
    <property type="entry name" value="TACO1_YebC_N"/>
    <property type="match status" value="1"/>
</dbReference>
<dbReference type="Pfam" id="PF01709">
    <property type="entry name" value="Transcrip_reg"/>
    <property type="match status" value="1"/>
</dbReference>
<dbReference type="SUPFAM" id="SSF75625">
    <property type="entry name" value="YebC-like"/>
    <property type="match status" value="1"/>
</dbReference>
<gene>
    <name type="ordered locus">CTA_0499</name>
</gene>